<dbReference type="EC" id="3.1.21.10" evidence="1"/>
<dbReference type="EMBL" id="AM263198">
    <property type="protein sequence ID" value="CAK21328.1"/>
    <property type="molecule type" value="Genomic_DNA"/>
</dbReference>
<dbReference type="RefSeq" id="WP_011702676.1">
    <property type="nucleotide sequence ID" value="NC_008555.1"/>
</dbReference>
<dbReference type="SMR" id="A0AJZ6"/>
<dbReference type="STRING" id="386043.lwe1910"/>
<dbReference type="GeneID" id="61189812"/>
<dbReference type="KEGG" id="lwe:lwe1910"/>
<dbReference type="eggNOG" id="COG3331">
    <property type="taxonomic scope" value="Bacteria"/>
</dbReference>
<dbReference type="HOGENOM" id="CLU_096340_0_0_9"/>
<dbReference type="OrthoDB" id="9783592at2"/>
<dbReference type="Proteomes" id="UP000000779">
    <property type="component" value="Chromosome"/>
</dbReference>
<dbReference type="GO" id="GO:0005737">
    <property type="term" value="C:cytoplasm"/>
    <property type="evidence" value="ECO:0007669"/>
    <property type="project" value="UniProtKB-SubCell"/>
</dbReference>
<dbReference type="GO" id="GO:0004519">
    <property type="term" value="F:endonuclease activity"/>
    <property type="evidence" value="ECO:0007669"/>
    <property type="project" value="UniProtKB-UniRule"/>
</dbReference>
<dbReference type="GO" id="GO:0000287">
    <property type="term" value="F:magnesium ion binding"/>
    <property type="evidence" value="ECO:0007669"/>
    <property type="project" value="UniProtKB-UniRule"/>
</dbReference>
<dbReference type="GO" id="GO:0003676">
    <property type="term" value="F:nucleic acid binding"/>
    <property type="evidence" value="ECO:0007669"/>
    <property type="project" value="InterPro"/>
</dbReference>
<dbReference type="GO" id="GO:0007059">
    <property type="term" value="P:chromosome segregation"/>
    <property type="evidence" value="ECO:0007669"/>
    <property type="project" value="UniProtKB-UniRule"/>
</dbReference>
<dbReference type="GO" id="GO:0006310">
    <property type="term" value="P:DNA recombination"/>
    <property type="evidence" value="ECO:0007669"/>
    <property type="project" value="UniProtKB-UniRule"/>
</dbReference>
<dbReference type="GO" id="GO:0006281">
    <property type="term" value="P:DNA repair"/>
    <property type="evidence" value="ECO:0007669"/>
    <property type="project" value="UniProtKB-UniRule"/>
</dbReference>
<dbReference type="CDD" id="cd22354">
    <property type="entry name" value="RecU-like"/>
    <property type="match status" value="1"/>
</dbReference>
<dbReference type="Gene3D" id="3.40.1350.10">
    <property type="match status" value="1"/>
</dbReference>
<dbReference type="HAMAP" id="MF_00130">
    <property type="entry name" value="RecU"/>
    <property type="match status" value="1"/>
</dbReference>
<dbReference type="InterPro" id="IPR004612">
    <property type="entry name" value="Resolv_RecU"/>
</dbReference>
<dbReference type="InterPro" id="IPR011335">
    <property type="entry name" value="Restrct_endonuc-II-like"/>
</dbReference>
<dbReference type="InterPro" id="IPR011856">
    <property type="entry name" value="tRNA_endonuc-like_dom_sf"/>
</dbReference>
<dbReference type="NCBIfam" id="NF002582">
    <property type="entry name" value="PRK02234.1-3"/>
    <property type="match status" value="1"/>
</dbReference>
<dbReference type="NCBIfam" id="NF002584">
    <property type="entry name" value="PRK02234.1-5"/>
    <property type="match status" value="1"/>
</dbReference>
<dbReference type="NCBIfam" id="TIGR00648">
    <property type="entry name" value="recU"/>
    <property type="match status" value="1"/>
</dbReference>
<dbReference type="Pfam" id="PF03838">
    <property type="entry name" value="RecU"/>
    <property type="match status" value="1"/>
</dbReference>
<dbReference type="PIRSF" id="PIRSF037785">
    <property type="entry name" value="RecU"/>
    <property type="match status" value="1"/>
</dbReference>
<dbReference type="SUPFAM" id="SSF52980">
    <property type="entry name" value="Restriction endonuclease-like"/>
    <property type="match status" value="1"/>
</dbReference>
<gene>
    <name evidence="1" type="primary">recU</name>
    <name type="ordered locus">lwe1910</name>
</gene>
<name>RECU_LISW6</name>
<organism>
    <name type="scientific">Listeria welshimeri serovar 6b (strain ATCC 35897 / DSM 20650 / CCUG 15529 / CIP 8149 / NCTC 11857 / SLCC 5334 / V8)</name>
    <dbReference type="NCBI Taxonomy" id="386043"/>
    <lineage>
        <taxon>Bacteria</taxon>
        <taxon>Bacillati</taxon>
        <taxon>Bacillota</taxon>
        <taxon>Bacilli</taxon>
        <taxon>Bacillales</taxon>
        <taxon>Listeriaceae</taxon>
        <taxon>Listeria</taxon>
    </lineage>
</organism>
<accession>A0AJZ6</accession>
<feature type="chain" id="PRO_1000016735" description="Holliday junction resolvase RecU">
    <location>
        <begin position="1"/>
        <end position="201"/>
    </location>
</feature>
<feature type="binding site" evidence="1">
    <location>
        <position position="87"/>
    </location>
    <ligand>
        <name>Mg(2+)</name>
        <dbReference type="ChEBI" id="CHEBI:18420"/>
    </ligand>
</feature>
<feature type="binding site" evidence="1">
    <location>
        <position position="89"/>
    </location>
    <ligand>
        <name>Mg(2+)</name>
        <dbReference type="ChEBI" id="CHEBI:18420"/>
    </ligand>
</feature>
<feature type="binding site" evidence="1">
    <location>
        <position position="102"/>
    </location>
    <ligand>
        <name>Mg(2+)</name>
        <dbReference type="ChEBI" id="CHEBI:18420"/>
    </ligand>
</feature>
<feature type="binding site" evidence="1">
    <location>
        <position position="121"/>
    </location>
    <ligand>
        <name>Mg(2+)</name>
        <dbReference type="ChEBI" id="CHEBI:18420"/>
    </ligand>
</feature>
<feature type="site" description="Transition state stabilizer" evidence="1">
    <location>
        <position position="104"/>
    </location>
</feature>
<sequence>MAIGYPNGKKYAASHEGIPQKKRKAPVTYGKRGMSLEDDLNDTIAYYLAQDIAVIHKKPTPVQIVSVDYPKRSSAKIKEAYFKTPSTTDYNGVYKGKYIDFEAKETQNTTSFPLSNFHDHQMIHMANVLKQDGIVFVIIAFQKIGETYFIPFEKFYPFWQRMQSGGRKSVTIAEIQDVSDQIPYGLNPRLDFLKSIEKLYF</sequence>
<keyword id="KW-0963">Cytoplasm</keyword>
<keyword id="KW-0227">DNA damage</keyword>
<keyword id="KW-0233">DNA recombination</keyword>
<keyword id="KW-0234">DNA repair</keyword>
<keyword id="KW-0255">Endonuclease</keyword>
<keyword id="KW-0378">Hydrolase</keyword>
<keyword id="KW-0460">Magnesium</keyword>
<keyword id="KW-0479">Metal-binding</keyword>
<keyword id="KW-0540">Nuclease</keyword>
<comment type="function">
    <text evidence="1">Endonuclease that resolves Holliday junction intermediates in genetic recombination. Cleaves mobile four-strand junctions by introducing symmetrical nicks in paired strands. Promotes annealing of linear ssDNA with homologous dsDNA. Required for DNA repair, homologous recombination and chromosome segregation.</text>
</comment>
<comment type="catalytic activity">
    <reaction evidence="1">
        <text>Endonucleolytic cleavage at a junction such as a reciprocal single-stranded crossover between two homologous DNA duplexes (Holliday junction).</text>
        <dbReference type="EC" id="3.1.21.10"/>
    </reaction>
</comment>
<comment type="cofactor">
    <cofactor evidence="1">
        <name>Mg(2+)</name>
        <dbReference type="ChEBI" id="CHEBI:18420"/>
    </cofactor>
    <text evidence="1">Binds 1 Mg(2+) ion per subunit.</text>
</comment>
<comment type="subcellular location">
    <subcellularLocation>
        <location evidence="1">Cytoplasm</location>
    </subcellularLocation>
</comment>
<comment type="similarity">
    <text evidence="1">Belongs to the RecU family.</text>
</comment>
<evidence type="ECO:0000255" key="1">
    <source>
        <dbReference type="HAMAP-Rule" id="MF_00130"/>
    </source>
</evidence>
<reference key="1">
    <citation type="journal article" date="2006" name="J. Bacteriol.">
        <title>Whole-genome sequence of Listeria welshimeri reveals common steps in genome reduction with Listeria innocua as compared to Listeria monocytogenes.</title>
        <authorList>
            <person name="Hain T."/>
            <person name="Steinweg C."/>
            <person name="Kuenne C.T."/>
            <person name="Billion A."/>
            <person name="Ghai R."/>
            <person name="Chatterjee S.S."/>
            <person name="Domann E."/>
            <person name="Kaerst U."/>
            <person name="Goesmann A."/>
            <person name="Bekel T."/>
            <person name="Bartels D."/>
            <person name="Kaiser O."/>
            <person name="Meyer F."/>
            <person name="Puehler A."/>
            <person name="Weisshaar B."/>
            <person name="Wehland J."/>
            <person name="Liang C."/>
            <person name="Dandekar T."/>
            <person name="Lampidis R."/>
            <person name="Kreft J."/>
            <person name="Goebel W."/>
            <person name="Chakraborty T."/>
        </authorList>
    </citation>
    <scope>NUCLEOTIDE SEQUENCE [LARGE SCALE GENOMIC DNA]</scope>
    <source>
        <strain>ATCC 35897 / DSM 20650 / CCUG 15529 / CIP 8149 / NCTC 11857 / SLCC 5334 / V8</strain>
    </source>
</reference>
<protein>
    <recommendedName>
        <fullName evidence="1">Holliday junction resolvase RecU</fullName>
        <ecNumber evidence="1">3.1.21.10</ecNumber>
    </recommendedName>
    <alternativeName>
        <fullName evidence="1">Recombination protein U homolog</fullName>
    </alternativeName>
</protein>
<proteinExistence type="inferred from homology"/>